<organism>
    <name type="scientific">Caenorhabditis briggsae</name>
    <dbReference type="NCBI Taxonomy" id="6238"/>
    <lineage>
        <taxon>Eukaryota</taxon>
        <taxon>Metazoa</taxon>
        <taxon>Ecdysozoa</taxon>
        <taxon>Nematoda</taxon>
        <taxon>Chromadorea</taxon>
        <taxon>Rhabditida</taxon>
        <taxon>Rhabditina</taxon>
        <taxon>Rhabditomorpha</taxon>
        <taxon>Rhabditoidea</taxon>
        <taxon>Rhabditidae</taxon>
        <taxon>Peloderinae</taxon>
        <taxon>Caenorhabditis</taxon>
    </lineage>
</organism>
<feature type="chain" id="PRO_0000328998" description="Tat-binding homolog 7">
    <location>
        <begin position="1"/>
        <end position="1285"/>
    </location>
</feature>
<feature type="domain" description="Bromo" evidence="4">
    <location>
        <begin position="928"/>
        <end position="1032"/>
    </location>
</feature>
<feature type="region of interest" description="Disordered" evidence="5">
    <location>
        <begin position="1"/>
        <end position="95"/>
    </location>
</feature>
<feature type="region of interest" description="Disordered" evidence="5">
    <location>
        <begin position="121"/>
        <end position="173"/>
    </location>
</feature>
<feature type="region of interest" description="Disordered" evidence="5">
    <location>
        <begin position="224"/>
        <end position="243"/>
    </location>
</feature>
<feature type="region of interest" description="Disordered" evidence="5">
    <location>
        <begin position="258"/>
        <end position="359"/>
    </location>
</feature>
<feature type="region of interest" description="Disordered" evidence="5">
    <location>
        <begin position="1100"/>
        <end position="1196"/>
    </location>
</feature>
<feature type="compositionally biased region" description="Acidic residues" evidence="5">
    <location>
        <begin position="226"/>
        <end position="237"/>
    </location>
</feature>
<feature type="compositionally biased region" description="Acidic residues" evidence="5">
    <location>
        <begin position="258"/>
        <end position="270"/>
    </location>
</feature>
<feature type="compositionally biased region" description="Basic residues" evidence="5">
    <location>
        <begin position="311"/>
        <end position="325"/>
    </location>
</feature>
<feature type="compositionally biased region" description="Basic residues" evidence="5">
    <location>
        <begin position="1136"/>
        <end position="1149"/>
    </location>
</feature>
<feature type="compositionally biased region" description="Acidic residues" evidence="5">
    <location>
        <begin position="1155"/>
        <end position="1175"/>
    </location>
</feature>
<feature type="binding site" evidence="1">
    <location>
        <begin position="446"/>
        <end position="453"/>
    </location>
    <ligand>
        <name>ATP</name>
        <dbReference type="ChEBI" id="CHEBI:30616"/>
    </ligand>
</feature>
<dbReference type="EMBL" id="HE600986">
    <property type="protein sequence ID" value="CAP26179.2"/>
    <property type="molecule type" value="Genomic_DNA"/>
</dbReference>
<dbReference type="SMR" id="A8X0L9"/>
<dbReference type="FunCoup" id="A8X0L9">
    <property type="interactions" value="2554"/>
</dbReference>
<dbReference type="STRING" id="6238.A8X0L9"/>
<dbReference type="WormBase" id="CBG06222">
    <property type="protein sequence ID" value="CBP46987"/>
    <property type="gene ID" value="WBGene00028529"/>
    <property type="gene designation" value="Cbr-lex-1"/>
</dbReference>
<dbReference type="eggNOG" id="KOG0732">
    <property type="taxonomic scope" value="Eukaryota"/>
</dbReference>
<dbReference type="HOGENOM" id="CLU_001448_3_1_1"/>
<dbReference type="InParanoid" id="A8X0L9"/>
<dbReference type="OMA" id="YNPAIRK"/>
<dbReference type="Proteomes" id="UP000008549">
    <property type="component" value="Unassembled WGS sequence"/>
</dbReference>
<dbReference type="GO" id="GO:0005634">
    <property type="term" value="C:nucleus"/>
    <property type="evidence" value="ECO:0000318"/>
    <property type="project" value="GO_Central"/>
</dbReference>
<dbReference type="GO" id="GO:0005524">
    <property type="term" value="F:ATP binding"/>
    <property type="evidence" value="ECO:0007669"/>
    <property type="project" value="UniProtKB-KW"/>
</dbReference>
<dbReference type="GO" id="GO:0016887">
    <property type="term" value="F:ATP hydrolysis activity"/>
    <property type="evidence" value="ECO:0000318"/>
    <property type="project" value="GO_Central"/>
</dbReference>
<dbReference type="GO" id="GO:0003682">
    <property type="term" value="F:chromatin binding"/>
    <property type="evidence" value="ECO:0000318"/>
    <property type="project" value="GO_Central"/>
</dbReference>
<dbReference type="GO" id="GO:0042393">
    <property type="term" value="F:histone binding"/>
    <property type="evidence" value="ECO:0000318"/>
    <property type="project" value="GO_Central"/>
</dbReference>
<dbReference type="GO" id="GO:0006334">
    <property type="term" value="P:nucleosome assembly"/>
    <property type="evidence" value="ECO:0000318"/>
    <property type="project" value="GO_Central"/>
</dbReference>
<dbReference type="GO" id="GO:0006337">
    <property type="term" value="P:nucleosome disassembly"/>
    <property type="evidence" value="ECO:0000318"/>
    <property type="project" value="GO_Central"/>
</dbReference>
<dbReference type="GO" id="GO:0045815">
    <property type="term" value="P:transcription initiation-coupled chromatin remodeling"/>
    <property type="evidence" value="ECO:0000318"/>
    <property type="project" value="GO_Central"/>
</dbReference>
<dbReference type="CDD" id="cd05528">
    <property type="entry name" value="Bromo_AAA"/>
    <property type="match status" value="1"/>
</dbReference>
<dbReference type="CDD" id="cd19517">
    <property type="entry name" value="RecA-like_Yta7-like"/>
    <property type="match status" value="1"/>
</dbReference>
<dbReference type="FunFam" id="1.10.8.60:FF:000016">
    <property type="entry name" value="ATPase family AAA domain-containing protein 2B"/>
    <property type="match status" value="1"/>
</dbReference>
<dbReference type="FunFam" id="3.40.50.300:FF:000061">
    <property type="entry name" value="ATPase family, AAA domain-containing 2"/>
    <property type="match status" value="1"/>
</dbReference>
<dbReference type="Gene3D" id="1.10.8.60">
    <property type="match status" value="1"/>
</dbReference>
<dbReference type="Gene3D" id="1.20.920.10">
    <property type="entry name" value="Bromodomain-like"/>
    <property type="match status" value="1"/>
</dbReference>
<dbReference type="Gene3D" id="3.40.50.300">
    <property type="entry name" value="P-loop containing nucleotide triphosphate hydrolases"/>
    <property type="match status" value="1"/>
</dbReference>
<dbReference type="InterPro" id="IPR003593">
    <property type="entry name" value="AAA+_ATPase"/>
</dbReference>
<dbReference type="InterPro" id="IPR041569">
    <property type="entry name" value="AAA_lid_3"/>
</dbReference>
<dbReference type="InterPro" id="IPR045199">
    <property type="entry name" value="ATAD2-like"/>
</dbReference>
<dbReference type="InterPro" id="IPR003959">
    <property type="entry name" value="ATPase_AAA_core"/>
</dbReference>
<dbReference type="InterPro" id="IPR003960">
    <property type="entry name" value="ATPase_AAA_CS"/>
</dbReference>
<dbReference type="InterPro" id="IPR001487">
    <property type="entry name" value="Bromodomain"/>
</dbReference>
<dbReference type="InterPro" id="IPR036427">
    <property type="entry name" value="Bromodomain-like_sf"/>
</dbReference>
<dbReference type="InterPro" id="IPR018359">
    <property type="entry name" value="Bromodomain_CS"/>
</dbReference>
<dbReference type="InterPro" id="IPR027417">
    <property type="entry name" value="P-loop_NTPase"/>
</dbReference>
<dbReference type="PANTHER" id="PTHR23069">
    <property type="entry name" value="AAA DOMAIN-CONTAINING"/>
    <property type="match status" value="1"/>
</dbReference>
<dbReference type="PANTHER" id="PTHR23069:SF0">
    <property type="entry name" value="TAT-BINDING HOMOLOG 7"/>
    <property type="match status" value="1"/>
</dbReference>
<dbReference type="Pfam" id="PF00004">
    <property type="entry name" value="AAA"/>
    <property type="match status" value="1"/>
</dbReference>
<dbReference type="Pfam" id="PF17862">
    <property type="entry name" value="AAA_lid_3"/>
    <property type="match status" value="1"/>
</dbReference>
<dbReference type="Pfam" id="PF00439">
    <property type="entry name" value="Bromodomain"/>
    <property type="match status" value="1"/>
</dbReference>
<dbReference type="PRINTS" id="PR00503">
    <property type="entry name" value="BROMODOMAIN"/>
</dbReference>
<dbReference type="SMART" id="SM00382">
    <property type="entry name" value="AAA"/>
    <property type="match status" value="1"/>
</dbReference>
<dbReference type="SMART" id="SM00297">
    <property type="entry name" value="BROMO"/>
    <property type="match status" value="1"/>
</dbReference>
<dbReference type="SUPFAM" id="SSF47370">
    <property type="entry name" value="Bromodomain"/>
    <property type="match status" value="1"/>
</dbReference>
<dbReference type="SUPFAM" id="SSF52540">
    <property type="entry name" value="P-loop containing nucleoside triphosphate hydrolases"/>
    <property type="match status" value="1"/>
</dbReference>
<dbReference type="PROSITE" id="PS00674">
    <property type="entry name" value="AAA"/>
    <property type="match status" value="1"/>
</dbReference>
<dbReference type="PROSITE" id="PS00633">
    <property type="entry name" value="BROMODOMAIN_1"/>
    <property type="match status" value="1"/>
</dbReference>
<dbReference type="PROSITE" id="PS50014">
    <property type="entry name" value="BROMODOMAIN_2"/>
    <property type="match status" value="1"/>
</dbReference>
<evidence type="ECO:0000250" key="1"/>
<evidence type="ECO:0000250" key="2">
    <source>
        <dbReference type="UniProtKB" id="P54816"/>
    </source>
</evidence>
<evidence type="ECO:0000255" key="3"/>
<evidence type="ECO:0000255" key="4">
    <source>
        <dbReference type="PROSITE-ProRule" id="PRU00035"/>
    </source>
</evidence>
<evidence type="ECO:0000256" key="5">
    <source>
        <dbReference type="SAM" id="MobiDB-lite"/>
    </source>
</evidence>
<gene>
    <name evidence="2" type="primary">lex-1</name>
    <name type="ORF">CBG06222</name>
</gene>
<reference key="1">
    <citation type="journal article" date="2003" name="PLoS Biol.">
        <title>The genome sequence of Caenorhabditis briggsae: a platform for comparative genomics.</title>
        <authorList>
            <person name="Stein L.D."/>
            <person name="Bao Z."/>
            <person name="Blasiar D."/>
            <person name="Blumenthal T."/>
            <person name="Brent M.R."/>
            <person name="Chen N."/>
            <person name="Chinwalla A."/>
            <person name="Clarke L."/>
            <person name="Clee C."/>
            <person name="Coghlan A."/>
            <person name="Coulson A."/>
            <person name="D'Eustachio P."/>
            <person name="Fitch D.H.A."/>
            <person name="Fulton L.A."/>
            <person name="Fulton R.E."/>
            <person name="Griffiths-Jones S."/>
            <person name="Harris T.W."/>
            <person name="Hillier L.W."/>
            <person name="Kamath R."/>
            <person name="Kuwabara P.E."/>
            <person name="Mardis E.R."/>
            <person name="Marra M.A."/>
            <person name="Miner T.L."/>
            <person name="Minx P."/>
            <person name="Mullikin J.C."/>
            <person name="Plumb R.W."/>
            <person name="Rogers J."/>
            <person name="Schein J.E."/>
            <person name="Sohrmann M."/>
            <person name="Spieth J."/>
            <person name="Stajich J.E."/>
            <person name="Wei C."/>
            <person name="Willey D."/>
            <person name="Wilson R.K."/>
            <person name="Durbin R.M."/>
            <person name="Waterston R.H."/>
        </authorList>
    </citation>
    <scope>NUCLEOTIDE SEQUENCE [LARGE SCALE GENOMIC DNA]</scope>
    <source>
        <strain>AF16</strain>
    </source>
</reference>
<protein>
    <recommendedName>
        <fullName>Tat-binding homolog 7</fullName>
    </recommendedName>
    <alternativeName>
        <fullName>Lin-48 expression abnormal protein 1</fullName>
    </alternativeName>
</protein>
<keyword id="KW-0067">ATP-binding</keyword>
<keyword id="KW-0103">Bromodomain</keyword>
<keyword id="KW-0547">Nucleotide-binding</keyword>
<keyword id="KW-1185">Reference proteome</keyword>
<keyword id="KW-0804">Transcription</keyword>
<name>TBP7_CAEBR</name>
<comment type="function">
    <text evidence="2">Thought to form a complex that enhances transcription from repetitive DNA sequences by modulating chromatin structure.</text>
</comment>
<comment type="similarity">
    <text evidence="3">Belongs to the AAA ATPase family.</text>
</comment>
<accession>A8X0L9</accession>
<proteinExistence type="inferred from homology"/>
<sequence>MARSDGFSPRKSLRRSAREHSRSYVGQGSNDDFDDMYSPPSRRRGSGGGDGNGYTRSGRKIHHSRYYEEDYQDAISSDDERMYRPRRNSNSLTYRQQCKQAIDESKRIQKVPPAKRKRIYMSDDEEEFVETRQMENTAPDRPTRRSSRRMSSTHEEPDVLDQEDVSPIRRTRRTTIRFGSEPVEENMEVPRVLETNDMANEAIVQAVDNTENGETEEDVIEKIGREEEEEGDEEEAESGEKEQVGLLFHRIFNQAYLQEDEESSNAESSEESTAPRQYSLRRRQPVVQFNQSEARENRRARLEHHRAANANRHHRNRNTSNRRRRSGSDSDSDDMVLPRPDKRQSRPHMHNRGERERGRFMPINMTEKELQSAQHILMDRMRKTDAGQGASDIDPMSVDSSVGFDQVGGLSHHIQSLKEVVLFPMLYPEVFAKFKINPPKGVVFYGPPGTGKTLVARALANECRRGANKVAFFMRKGADCLSKWVGESERQLRLLFDQAYAMRPSIIFFDEIDGLAPVRSSKQDQIHASIVSTLLALMDGLDGRGEVVVIGATNRLDSLDPALRRPGRFDRELRFSLPDLNARRHILDIHTSKWEENKPTPETLDGIAEKTSGYCGADLKFLCTESVLIGLRSRYPHIYMCSERLKLDITTIKITEEHFGHAMRRITPASRRDLTIPSRPLDERTSILLGDIVKNLISLRIPQGYRCVENAMATASTELEQVVRALEPNLTVPAIRLLLCGSPSLSDGGQTSYVLPAILAKLDHLPVFSLSVSSLLTDGRPEEAFSNAVQSAMRASATGPCIMLLPSIDEWIKVIPVSVQHMLITCLESMTGFTPILFLSTLDSSFEDAPEYATEVFRHANCISLNPSRRSVRKRYFEFVIDGVRRKPKVFDPTIYEMPQADDDSPEAKPSRKLNDDETRELLKMYTALQRQMRMFFKERLSRLIRDRRFVEFVEPVDPEEAEDYYEIIETPICMQDIMEKLNKCEYNHADKFIADLVLIQSNALEYNPSNTKDGKLIRQMANTFRDAIDDMIDCELDESFVERIEMVSRMLQDAGVTPTSDQLLTEIPKGFSRKKPWTMANTLAKEIEQWKAEREAENEKLKEKLGISTDTAQSAIEENKSEEGTSSSVEEIKKKLNKKKKDQKRNKKASSQDPDGDDTEETEEAVAENNVDADVEMKETPADPVPTIQSSSSQEREIIVSADSITDLIKLCVEKSEGWSVSELERLSSVLSHTIERFRDEWNRENLPEQLAQIVREWEATDATNEKIANGKASNKNGIVFNGY</sequence>